<name>ISPDF_CAMJR</name>
<reference key="1">
    <citation type="journal article" date="2005" name="PLoS Biol.">
        <title>Major structural differences and novel potential virulence mechanisms from the genomes of multiple Campylobacter species.</title>
        <authorList>
            <person name="Fouts D.E."/>
            <person name="Mongodin E.F."/>
            <person name="Mandrell R.E."/>
            <person name="Miller W.G."/>
            <person name="Rasko D.A."/>
            <person name="Ravel J."/>
            <person name="Brinkac L.M."/>
            <person name="DeBoy R.T."/>
            <person name="Parker C.T."/>
            <person name="Daugherty S.C."/>
            <person name="Dodson R.J."/>
            <person name="Durkin A.S."/>
            <person name="Madupu R."/>
            <person name="Sullivan S.A."/>
            <person name="Shetty J.U."/>
            <person name="Ayodeji M.A."/>
            <person name="Shvartsbeyn A."/>
            <person name="Schatz M.C."/>
            <person name="Badger J.H."/>
            <person name="Fraser C.M."/>
            <person name="Nelson K.E."/>
        </authorList>
    </citation>
    <scope>NUCLEOTIDE SEQUENCE [LARGE SCALE GENOMIC DNA]</scope>
    <source>
        <strain>RM1221</strain>
    </source>
</reference>
<accession>Q5HSI4</accession>
<sequence>MSEMSLIMLAAGNSTRFNTKVKKQFLRLGNDPLWLYATKNLSSFYPFKKIVVTSSNITYMKKFTKNYEFIEGGDTRAESLKKALELIDSEFVMVSDVARVLVSKNLFDRLIENLDKADCITPALKVADTTLFDNEALQREKIKLIQTPQISKTKLLKKALDQNLEFTDDSTAIAAMGGKIWFVEGEENARKLTFKEDLKKLNLPTPSFEIFTGNGFDVHEFGENRPLLLAGVQIHPTMGLKAHSDGDVLAHSLTDAILGAAGLGDIGELYPDTDMKFKNANSMELLKQAYDKVREIGFELINIDICVMAQSPKLKDFKQAMQSNIAHTLDLDEFRINVKATTTEKLGFIGRKEGMAVLSSVNLKYFDWTRL</sequence>
<organism>
    <name type="scientific">Campylobacter jejuni (strain RM1221)</name>
    <dbReference type="NCBI Taxonomy" id="195099"/>
    <lineage>
        <taxon>Bacteria</taxon>
        <taxon>Pseudomonadati</taxon>
        <taxon>Campylobacterota</taxon>
        <taxon>Epsilonproteobacteria</taxon>
        <taxon>Campylobacterales</taxon>
        <taxon>Campylobacteraceae</taxon>
        <taxon>Campylobacter</taxon>
    </lineage>
</organism>
<comment type="function">
    <text evidence="1">Bifunctional enzyme that catalyzes the formation of 4-diphosphocytidyl-2-C-methyl-D-erythritol from CTP and 2-C-methyl-D-erythritol 4-phosphate (MEP) (IspD), and catalyzes the conversion of 4-diphosphocytidyl-2-C-methyl-D-erythritol 2-phosphate (CDP-ME2P) to 2-C-methyl-D-erythritol 2,4-cyclodiphosphate (ME-CPP) with a corresponding release of cytidine 5-monophosphate (CMP) (IspF).</text>
</comment>
<comment type="catalytic activity">
    <reaction evidence="1">
        <text>2-C-methyl-D-erythritol 4-phosphate + CTP + H(+) = 4-CDP-2-C-methyl-D-erythritol + diphosphate</text>
        <dbReference type="Rhea" id="RHEA:13429"/>
        <dbReference type="ChEBI" id="CHEBI:15378"/>
        <dbReference type="ChEBI" id="CHEBI:33019"/>
        <dbReference type="ChEBI" id="CHEBI:37563"/>
        <dbReference type="ChEBI" id="CHEBI:57823"/>
        <dbReference type="ChEBI" id="CHEBI:58262"/>
        <dbReference type="EC" id="2.7.7.60"/>
    </reaction>
</comment>
<comment type="catalytic activity">
    <reaction evidence="1">
        <text>4-CDP-2-C-methyl-D-erythritol 2-phosphate = 2-C-methyl-D-erythritol 2,4-cyclic diphosphate + CMP</text>
        <dbReference type="Rhea" id="RHEA:23864"/>
        <dbReference type="ChEBI" id="CHEBI:57919"/>
        <dbReference type="ChEBI" id="CHEBI:58483"/>
        <dbReference type="ChEBI" id="CHEBI:60377"/>
        <dbReference type="EC" id="4.6.1.12"/>
    </reaction>
</comment>
<comment type="cofactor">
    <cofactor evidence="1">
        <name>a divalent metal cation</name>
        <dbReference type="ChEBI" id="CHEBI:60240"/>
    </cofactor>
</comment>
<comment type="pathway">
    <text evidence="1">Isoprenoid biosynthesis; isopentenyl diphosphate biosynthesis via DXP pathway; isopentenyl diphosphate from 1-deoxy-D-xylulose 5-phosphate: step 2/6.</text>
</comment>
<comment type="pathway">
    <text evidence="1">Isoprenoid biosynthesis; isopentenyl diphosphate biosynthesis via DXP pathway; isopentenyl diphosphate from 1-deoxy-D-xylulose 5-phosphate: step 4/6.</text>
</comment>
<comment type="similarity">
    <text evidence="1">In the N-terminal section; belongs to the IspD/TarI cytidylyltransferase family. IspD subfamily.</text>
</comment>
<comment type="similarity">
    <text evidence="1">In the C-terminal section; belongs to the IspF family.</text>
</comment>
<keyword id="KW-0414">Isoprene biosynthesis</keyword>
<keyword id="KW-0456">Lyase</keyword>
<keyword id="KW-0479">Metal-binding</keyword>
<keyword id="KW-0511">Multifunctional enzyme</keyword>
<keyword id="KW-0548">Nucleotidyltransferase</keyword>
<keyword id="KW-0808">Transferase</keyword>
<feature type="chain" id="PRO_0000075663" description="Bifunctional enzyme IspD/IspF">
    <location>
        <begin position="1"/>
        <end position="371"/>
    </location>
</feature>
<feature type="region of interest" description="2-C-methyl-D-erythritol 4-phosphate cytidylyltransferase" evidence="1">
    <location>
        <begin position="1"/>
        <end position="210"/>
    </location>
</feature>
<feature type="region of interest" description="2-C-methyl-D-erythritol 2,4-cyclodiphosphate synthase" evidence="1">
    <location>
        <begin position="211"/>
        <end position="371"/>
    </location>
</feature>
<feature type="binding site" evidence="1">
    <location>
        <begin position="217"/>
        <end position="219"/>
    </location>
    <ligand>
        <name>4-CDP-2-C-methyl-D-erythritol 2-phosphate</name>
        <dbReference type="ChEBI" id="CHEBI:57919"/>
    </ligand>
</feature>
<feature type="binding site" evidence="1">
    <location>
        <position position="217"/>
    </location>
    <ligand>
        <name>a divalent metal cation</name>
        <dbReference type="ChEBI" id="CHEBI:60240"/>
    </ligand>
</feature>
<feature type="binding site" evidence="1">
    <location>
        <position position="219"/>
    </location>
    <ligand>
        <name>a divalent metal cation</name>
        <dbReference type="ChEBI" id="CHEBI:60240"/>
    </ligand>
</feature>
<feature type="binding site" evidence="1">
    <location>
        <begin position="243"/>
        <end position="244"/>
    </location>
    <ligand>
        <name>4-CDP-2-C-methyl-D-erythritol 2-phosphate</name>
        <dbReference type="ChEBI" id="CHEBI:57919"/>
    </ligand>
</feature>
<feature type="binding site" evidence="1">
    <location>
        <position position="251"/>
    </location>
    <ligand>
        <name>a divalent metal cation</name>
        <dbReference type="ChEBI" id="CHEBI:60240"/>
    </ligand>
</feature>
<feature type="binding site" evidence="1">
    <location>
        <begin position="265"/>
        <end position="267"/>
    </location>
    <ligand>
        <name>4-CDP-2-C-methyl-D-erythritol 2-phosphate</name>
        <dbReference type="ChEBI" id="CHEBI:57919"/>
    </ligand>
</feature>
<feature type="binding site" evidence="1">
    <location>
        <begin position="270"/>
        <end position="274"/>
    </location>
    <ligand>
        <name>4-CDP-2-C-methyl-D-erythritol 2-phosphate</name>
        <dbReference type="ChEBI" id="CHEBI:57919"/>
    </ligand>
</feature>
<feature type="binding site" evidence="1">
    <location>
        <begin position="341"/>
        <end position="344"/>
    </location>
    <ligand>
        <name>4-CDP-2-C-methyl-D-erythritol 2-phosphate</name>
        <dbReference type="ChEBI" id="CHEBI:57919"/>
    </ligand>
</feature>
<feature type="binding site" evidence="1">
    <location>
        <position position="348"/>
    </location>
    <ligand>
        <name>4-CDP-2-C-methyl-D-erythritol 2-phosphate</name>
        <dbReference type="ChEBI" id="CHEBI:57919"/>
    </ligand>
</feature>
<feature type="binding site" evidence="1">
    <location>
        <position position="351"/>
    </location>
    <ligand>
        <name>4-CDP-2-C-methyl-D-erythritol 2-phosphate</name>
        <dbReference type="ChEBI" id="CHEBI:57919"/>
    </ligand>
</feature>
<feature type="site" description="Transition state stabilizer" evidence="1">
    <location>
        <position position="16"/>
    </location>
</feature>
<feature type="site" description="Transition state stabilizer" evidence="1">
    <location>
        <position position="23"/>
    </location>
</feature>
<feature type="site" description="Positions MEP for the nucleophilic attack" evidence="1">
    <location>
        <position position="139"/>
    </location>
</feature>
<feature type="site" description="Positions MEP for the nucleophilic attack" evidence="1">
    <location>
        <position position="191"/>
    </location>
</feature>
<feature type="site" description="Transition state stabilizer" evidence="1">
    <location>
        <position position="243"/>
    </location>
</feature>
<feature type="site" description="Transition state stabilizer" evidence="1">
    <location>
        <position position="342"/>
    </location>
</feature>
<proteinExistence type="inferred from homology"/>
<evidence type="ECO:0000255" key="1">
    <source>
        <dbReference type="HAMAP-Rule" id="MF_01520"/>
    </source>
</evidence>
<protein>
    <recommendedName>
        <fullName evidence="1">Bifunctional enzyme IspD/IspF</fullName>
    </recommendedName>
    <domain>
        <recommendedName>
            <fullName evidence="1">2-C-methyl-D-erythritol 4-phosphate cytidylyltransferase</fullName>
            <ecNumber evidence="1">2.7.7.60</ecNumber>
        </recommendedName>
        <alternativeName>
            <fullName evidence="1">4-diphosphocytidyl-2C-methyl-D-erythritol synthase</fullName>
        </alternativeName>
        <alternativeName>
            <fullName evidence="1">MEP cytidylyltransferase</fullName>
            <shortName evidence="1">MCT</shortName>
        </alternativeName>
    </domain>
    <domain>
        <recommendedName>
            <fullName evidence="1">2-C-methyl-D-erythritol 2,4-cyclodiphosphate synthase</fullName>
            <shortName evidence="1">MECDP-synthase</shortName>
            <shortName evidence="1">MECPP-synthase</shortName>
            <shortName evidence="1">MECPS</shortName>
            <ecNumber evidence="1">4.6.1.12</ecNumber>
        </recommendedName>
    </domain>
</protein>
<dbReference type="EC" id="2.7.7.60" evidence="1"/>
<dbReference type="EC" id="4.6.1.12" evidence="1"/>
<dbReference type="EMBL" id="CP000025">
    <property type="protein sequence ID" value="AAW36203.1"/>
    <property type="molecule type" value="Genomic_DNA"/>
</dbReference>
<dbReference type="RefSeq" id="WP_002867571.1">
    <property type="nucleotide sequence ID" value="NC_003912.7"/>
</dbReference>
<dbReference type="SMR" id="Q5HSI4"/>
<dbReference type="KEGG" id="cjr:CJE1779"/>
<dbReference type="HOGENOM" id="CLU_042800_2_5_7"/>
<dbReference type="UniPathway" id="UPA00056">
    <property type="reaction ID" value="UER00093"/>
</dbReference>
<dbReference type="UniPathway" id="UPA00056">
    <property type="reaction ID" value="UER00095"/>
</dbReference>
<dbReference type="GO" id="GO:0008685">
    <property type="term" value="F:2-C-methyl-D-erythritol 2,4-cyclodiphosphate synthase activity"/>
    <property type="evidence" value="ECO:0007669"/>
    <property type="project" value="UniProtKB-UniRule"/>
</dbReference>
<dbReference type="GO" id="GO:0050518">
    <property type="term" value="F:2-C-methyl-D-erythritol 4-phosphate cytidylyltransferase activity"/>
    <property type="evidence" value="ECO:0007669"/>
    <property type="project" value="UniProtKB-UniRule"/>
</dbReference>
<dbReference type="GO" id="GO:0046872">
    <property type="term" value="F:metal ion binding"/>
    <property type="evidence" value="ECO:0007669"/>
    <property type="project" value="UniProtKB-KW"/>
</dbReference>
<dbReference type="GO" id="GO:0019288">
    <property type="term" value="P:isopentenyl diphosphate biosynthetic process, methylerythritol 4-phosphate pathway"/>
    <property type="evidence" value="ECO:0007669"/>
    <property type="project" value="UniProtKB-UniRule"/>
</dbReference>
<dbReference type="GO" id="GO:0016114">
    <property type="term" value="P:terpenoid biosynthetic process"/>
    <property type="evidence" value="ECO:0007669"/>
    <property type="project" value="InterPro"/>
</dbReference>
<dbReference type="CDD" id="cd02516">
    <property type="entry name" value="CDP-ME_synthetase"/>
    <property type="match status" value="1"/>
</dbReference>
<dbReference type="CDD" id="cd00554">
    <property type="entry name" value="MECDP_synthase"/>
    <property type="match status" value="1"/>
</dbReference>
<dbReference type="Gene3D" id="3.30.1330.50">
    <property type="entry name" value="2-C-methyl-D-erythritol 2,4-cyclodiphosphate synthase"/>
    <property type="match status" value="1"/>
</dbReference>
<dbReference type="Gene3D" id="3.90.550.10">
    <property type="entry name" value="Spore Coat Polysaccharide Biosynthesis Protein SpsA, Chain A"/>
    <property type="match status" value="1"/>
</dbReference>
<dbReference type="HAMAP" id="MF_01520">
    <property type="entry name" value="IspDF"/>
    <property type="match status" value="1"/>
</dbReference>
<dbReference type="HAMAP" id="MF_00107">
    <property type="entry name" value="IspF"/>
    <property type="match status" value="1"/>
</dbReference>
<dbReference type="InterPro" id="IPR001228">
    <property type="entry name" value="IspD"/>
</dbReference>
<dbReference type="InterPro" id="IPR026596">
    <property type="entry name" value="IspD/F"/>
</dbReference>
<dbReference type="InterPro" id="IPR034683">
    <property type="entry name" value="IspD/TarI"/>
</dbReference>
<dbReference type="InterPro" id="IPR018294">
    <property type="entry name" value="ISPD_synthase_CS"/>
</dbReference>
<dbReference type="InterPro" id="IPR003526">
    <property type="entry name" value="MECDP_synthase"/>
</dbReference>
<dbReference type="InterPro" id="IPR020555">
    <property type="entry name" value="MECDP_synthase_CS"/>
</dbReference>
<dbReference type="InterPro" id="IPR036571">
    <property type="entry name" value="MECDP_synthase_sf"/>
</dbReference>
<dbReference type="InterPro" id="IPR029044">
    <property type="entry name" value="Nucleotide-diphossugar_trans"/>
</dbReference>
<dbReference type="NCBIfam" id="TIGR00453">
    <property type="entry name" value="ispD"/>
    <property type="match status" value="1"/>
</dbReference>
<dbReference type="NCBIfam" id="TIGR00151">
    <property type="entry name" value="ispF"/>
    <property type="match status" value="1"/>
</dbReference>
<dbReference type="NCBIfam" id="NF006899">
    <property type="entry name" value="PRK09382.1"/>
    <property type="match status" value="1"/>
</dbReference>
<dbReference type="PANTHER" id="PTHR43181">
    <property type="entry name" value="2-C-METHYL-D-ERYTHRITOL 2,4-CYCLODIPHOSPHATE SYNTHASE, CHLOROPLASTIC"/>
    <property type="match status" value="1"/>
</dbReference>
<dbReference type="PANTHER" id="PTHR43181:SF1">
    <property type="entry name" value="2-C-METHYL-D-ERYTHRITOL 2,4-CYCLODIPHOSPHATE SYNTHASE, CHLOROPLASTIC"/>
    <property type="match status" value="1"/>
</dbReference>
<dbReference type="Pfam" id="PF01128">
    <property type="entry name" value="IspD"/>
    <property type="match status" value="1"/>
</dbReference>
<dbReference type="Pfam" id="PF02542">
    <property type="entry name" value="YgbB"/>
    <property type="match status" value="1"/>
</dbReference>
<dbReference type="SUPFAM" id="SSF69765">
    <property type="entry name" value="IpsF-like"/>
    <property type="match status" value="1"/>
</dbReference>
<dbReference type="SUPFAM" id="SSF53448">
    <property type="entry name" value="Nucleotide-diphospho-sugar transferases"/>
    <property type="match status" value="1"/>
</dbReference>
<dbReference type="PROSITE" id="PS01295">
    <property type="entry name" value="ISPD"/>
    <property type="match status" value="1"/>
</dbReference>
<dbReference type="PROSITE" id="PS01350">
    <property type="entry name" value="ISPF"/>
    <property type="match status" value="1"/>
</dbReference>
<gene>
    <name evidence="1" type="primary">ispDF</name>
    <name type="ordered locus">CJE1779</name>
</gene>